<reference key="1">
    <citation type="submission" date="2007-10" db="EMBL/GenBank/DDBJ databases">
        <title>Complete sequence of Desulfococcus oleovorans Hxd3.</title>
        <authorList>
            <consortium name="US DOE Joint Genome Institute"/>
            <person name="Copeland A."/>
            <person name="Lucas S."/>
            <person name="Lapidus A."/>
            <person name="Barry K."/>
            <person name="Glavina del Rio T."/>
            <person name="Dalin E."/>
            <person name="Tice H."/>
            <person name="Pitluck S."/>
            <person name="Kiss H."/>
            <person name="Brettin T."/>
            <person name="Bruce D."/>
            <person name="Detter J.C."/>
            <person name="Han C."/>
            <person name="Schmutz J."/>
            <person name="Larimer F."/>
            <person name="Land M."/>
            <person name="Hauser L."/>
            <person name="Kyrpides N."/>
            <person name="Kim E."/>
            <person name="Wawrik B."/>
            <person name="Richardson P."/>
        </authorList>
    </citation>
    <scope>NUCLEOTIDE SEQUENCE [LARGE SCALE GENOMIC DNA]</scope>
    <source>
        <strain>DSM 6200 / JCM 39069 / Hxd3</strain>
    </source>
</reference>
<organism>
    <name type="scientific">Desulfosudis oleivorans (strain DSM 6200 / JCM 39069 / Hxd3)</name>
    <name type="common">Desulfococcus oleovorans</name>
    <dbReference type="NCBI Taxonomy" id="96561"/>
    <lineage>
        <taxon>Bacteria</taxon>
        <taxon>Pseudomonadati</taxon>
        <taxon>Thermodesulfobacteriota</taxon>
        <taxon>Desulfobacteria</taxon>
        <taxon>Desulfobacterales</taxon>
        <taxon>Desulfosudaceae</taxon>
        <taxon>Desulfosudis</taxon>
    </lineage>
</organism>
<keyword id="KW-1185">Reference proteome</keyword>
<feature type="chain" id="PRO_1000100315" description="CinA-like protein">
    <location>
        <begin position="1"/>
        <end position="413"/>
    </location>
</feature>
<name>CINAL_DESOH</name>
<comment type="similarity">
    <text evidence="1">Belongs to the CinA family.</text>
</comment>
<dbReference type="EMBL" id="CP000859">
    <property type="protein sequence ID" value="ABW67374.1"/>
    <property type="molecule type" value="Genomic_DNA"/>
</dbReference>
<dbReference type="RefSeq" id="WP_012174990.1">
    <property type="nucleotide sequence ID" value="NC_009943.1"/>
</dbReference>
<dbReference type="SMR" id="A8ZZX4"/>
<dbReference type="STRING" id="96561.Dole_1570"/>
<dbReference type="KEGG" id="dol:Dole_1570"/>
<dbReference type="eggNOG" id="COG1058">
    <property type="taxonomic scope" value="Bacteria"/>
</dbReference>
<dbReference type="eggNOG" id="COG1546">
    <property type="taxonomic scope" value="Bacteria"/>
</dbReference>
<dbReference type="HOGENOM" id="CLU_030805_9_2_7"/>
<dbReference type="OrthoDB" id="9801454at2"/>
<dbReference type="Proteomes" id="UP000008561">
    <property type="component" value="Chromosome"/>
</dbReference>
<dbReference type="CDD" id="cd00885">
    <property type="entry name" value="cinA"/>
    <property type="match status" value="1"/>
</dbReference>
<dbReference type="Gene3D" id="3.90.950.20">
    <property type="entry name" value="CinA-like"/>
    <property type="match status" value="1"/>
</dbReference>
<dbReference type="Gene3D" id="3.40.980.10">
    <property type="entry name" value="MoaB/Mog-like domain"/>
    <property type="match status" value="1"/>
</dbReference>
<dbReference type="HAMAP" id="MF_00226_B">
    <property type="entry name" value="CinA_B"/>
    <property type="match status" value="1"/>
</dbReference>
<dbReference type="InterPro" id="IPR050101">
    <property type="entry name" value="CinA"/>
</dbReference>
<dbReference type="InterPro" id="IPR036653">
    <property type="entry name" value="CinA-like_C"/>
</dbReference>
<dbReference type="InterPro" id="IPR008136">
    <property type="entry name" value="CinA_C"/>
</dbReference>
<dbReference type="InterPro" id="IPR041424">
    <property type="entry name" value="CinA_KH"/>
</dbReference>
<dbReference type="InterPro" id="IPR008135">
    <property type="entry name" value="Competence-induced_CinA"/>
</dbReference>
<dbReference type="InterPro" id="IPR036425">
    <property type="entry name" value="MoaB/Mog-like_dom_sf"/>
</dbReference>
<dbReference type="InterPro" id="IPR001453">
    <property type="entry name" value="MoaB/Mog_dom"/>
</dbReference>
<dbReference type="NCBIfam" id="TIGR00200">
    <property type="entry name" value="cinA_nterm"/>
    <property type="match status" value="1"/>
</dbReference>
<dbReference type="NCBIfam" id="TIGR00177">
    <property type="entry name" value="molyb_syn"/>
    <property type="match status" value="1"/>
</dbReference>
<dbReference type="NCBIfam" id="TIGR00199">
    <property type="entry name" value="PncC_domain"/>
    <property type="match status" value="1"/>
</dbReference>
<dbReference type="NCBIfam" id="NF001813">
    <property type="entry name" value="PRK00549.1"/>
    <property type="match status" value="1"/>
</dbReference>
<dbReference type="PANTHER" id="PTHR13939">
    <property type="entry name" value="NICOTINAMIDE-NUCLEOTIDE AMIDOHYDROLASE PNCC"/>
    <property type="match status" value="1"/>
</dbReference>
<dbReference type="PANTHER" id="PTHR13939:SF0">
    <property type="entry name" value="NMN AMIDOHYDROLASE-LIKE PROTEIN YFAY"/>
    <property type="match status" value="1"/>
</dbReference>
<dbReference type="Pfam" id="PF02464">
    <property type="entry name" value="CinA"/>
    <property type="match status" value="1"/>
</dbReference>
<dbReference type="Pfam" id="PF18146">
    <property type="entry name" value="CinA_KH"/>
    <property type="match status" value="1"/>
</dbReference>
<dbReference type="Pfam" id="PF00994">
    <property type="entry name" value="MoCF_biosynth"/>
    <property type="match status" value="1"/>
</dbReference>
<dbReference type="PIRSF" id="PIRSF006728">
    <property type="entry name" value="CinA"/>
    <property type="match status" value="1"/>
</dbReference>
<dbReference type="SMART" id="SM00852">
    <property type="entry name" value="MoCF_biosynth"/>
    <property type="match status" value="1"/>
</dbReference>
<dbReference type="SUPFAM" id="SSF142433">
    <property type="entry name" value="CinA-like"/>
    <property type="match status" value="1"/>
</dbReference>
<dbReference type="SUPFAM" id="SSF53218">
    <property type="entry name" value="Molybdenum cofactor biosynthesis proteins"/>
    <property type="match status" value="1"/>
</dbReference>
<sequence>MIAEILATGNEVLSGTIADTNAAHIAQILEAAGIEVRRHTCVGDDLDHIAAAVTEICARADVLLVTGGLGPTGDDLTTAAVARAAKKKLVLDPDAEHSMKTYFVQRKRSMQPSDAKQAMLPEGAQCIVNDIGTAPGFMLAMGHCHVFVMPGVPHEMKQMLETGVMPRIETLQGGGRLYAASRTLTVFGLPESTVGERMAGFGAALPGMRYGIRVRFPEIFIKVSTRQPDSRTAQDLAGQACQWVKKQVGESVFSDAGLALEAEVGRLLVSAKATVAVAESCTGGLIADLLTGVPGSSDYFLFSGVTYANQAKVDVLGVSPQTIETHGAVSEETVKEMADGVRRVAGATFGLATSGIAGPSGGTKEKPVGTVCIGLAGPDGVQTSHVCLSFQNRSMNKRLFAFLALETLRRKLL</sequence>
<protein>
    <recommendedName>
        <fullName evidence="1">CinA-like protein</fullName>
    </recommendedName>
</protein>
<proteinExistence type="inferred from homology"/>
<evidence type="ECO:0000255" key="1">
    <source>
        <dbReference type="HAMAP-Rule" id="MF_00226"/>
    </source>
</evidence>
<gene>
    <name type="ordered locus">Dole_1570</name>
</gene>
<accession>A8ZZX4</accession>